<dbReference type="EMBL" id="FM211187">
    <property type="protein sequence ID" value="CAR69228.1"/>
    <property type="molecule type" value="Genomic_DNA"/>
</dbReference>
<dbReference type="RefSeq" id="WP_000371287.1">
    <property type="nucleotide sequence ID" value="NC_011900.1"/>
</dbReference>
<dbReference type="SMR" id="B8ZL19"/>
<dbReference type="KEGG" id="sne:SPN23F14380"/>
<dbReference type="HOGENOM" id="CLU_173137_0_2_9"/>
<dbReference type="GO" id="GO:0005737">
    <property type="term" value="C:cytoplasm"/>
    <property type="evidence" value="ECO:0007669"/>
    <property type="project" value="UniProtKB-SubCell"/>
</dbReference>
<dbReference type="Gene3D" id="1.10.287.540">
    <property type="entry name" value="Helix hairpin bin"/>
    <property type="match status" value="1"/>
</dbReference>
<dbReference type="HAMAP" id="MF_01103">
    <property type="entry name" value="UPF0291"/>
    <property type="match status" value="1"/>
</dbReference>
<dbReference type="InterPro" id="IPR009242">
    <property type="entry name" value="DUF896"/>
</dbReference>
<dbReference type="NCBIfam" id="NF002711">
    <property type="entry name" value="PRK02539.1"/>
    <property type="match status" value="1"/>
</dbReference>
<dbReference type="PANTHER" id="PTHR37300">
    <property type="entry name" value="UPF0291 PROTEIN CBO2609/CLC_2481"/>
    <property type="match status" value="1"/>
</dbReference>
<dbReference type="PANTHER" id="PTHR37300:SF1">
    <property type="entry name" value="UPF0291 PROTEIN YNZC"/>
    <property type="match status" value="1"/>
</dbReference>
<dbReference type="Pfam" id="PF05979">
    <property type="entry name" value="DUF896"/>
    <property type="match status" value="1"/>
</dbReference>
<dbReference type="SUPFAM" id="SSF158221">
    <property type="entry name" value="YnzC-like"/>
    <property type="match status" value="1"/>
</dbReference>
<gene>
    <name type="ordered locus">SPN23F14380</name>
</gene>
<sequence>MDPKKIARINELAKKKKTEGLTPEEKVEQAKLREEYIEGYRRAVRHHIEGIKIVDEEGNDVTPEKLRQVQREKGLHGRSLDDPNS</sequence>
<feature type="chain" id="PRO_1000180979" description="UPF0291 protein SPN23F14380">
    <location>
        <begin position="1"/>
        <end position="85"/>
    </location>
</feature>
<feature type="region of interest" description="Disordered" evidence="2">
    <location>
        <begin position="62"/>
        <end position="85"/>
    </location>
</feature>
<reference key="1">
    <citation type="journal article" date="2009" name="J. Bacteriol.">
        <title>Role of conjugative elements in the evolution of the multidrug-resistant pandemic clone Streptococcus pneumoniae Spain23F ST81.</title>
        <authorList>
            <person name="Croucher N.J."/>
            <person name="Walker D."/>
            <person name="Romero P."/>
            <person name="Lennard N."/>
            <person name="Paterson G.K."/>
            <person name="Bason N.C."/>
            <person name="Mitchell A.M."/>
            <person name="Quail M.A."/>
            <person name="Andrew P.W."/>
            <person name="Parkhill J."/>
            <person name="Bentley S.D."/>
            <person name="Mitchell T.J."/>
        </authorList>
    </citation>
    <scope>NUCLEOTIDE SEQUENCE [LARGE SCALE GENOMIC DNA]</scope>
    <source>
        <strain>ATCC 700669 / Spain 23F-1</strain>
    </source>
</reference>
<keyword id="KW-0963">Cytoplasm</keyword>
<protein>
    <recommendedName>
        <fullName evidence="1">UPF0291 protein SPN23F14380</fullName>
    </recommendedName>
</protein>
<name>Y1438_STRPJ</name>
<evidence type="ECO:0000255" key="1">
    <source>
        <dbReference type="HAMAP-Rule" id="MF_01103"/>
    </source>
</evidence>
<evidence type="ECO:0000256" key="2">
    <source>
        <dbReference type="SAM" id="MobiDB-lite"/>
    </source>
</evidence>
<accession>B8ZL19</accession>
<comment type="subcellular location">
    <subcellularLocation>
        <location evidence="1">Cytoplasm</location>
    </subcellularLocation>
</comment>
<comment type="similarity">
    <text evidence="1">Belongs to the UPF0291 family.</text>
</comment>
<organism>
    <name type="scientific">Streptococcus pneumoniae (strain ATCC 700669 / Spain 23F-1)</name>
    <dbReference type="NCBI Taxonomy" id="561276"/>
    <lineage>
        <taxon>Bacteria</taxon>
        <taxon>Bacillati</taxon>
        <taxon>Bacillota</taxon>
        <taxon>Bacilli</taxon>
        <taxon>Lactobacillales</taxon>
        <taxon>Streptococcaceae</taxon>
        <taxon>Streptococcus</taxon>
    </lineage>
</organism>
<proteinExistence type="inferred from homology"/>